<feature type="chain" id="PRO_0000369900" description="Serine hydroxymethyltransferase">
    <location>
        <begin position="1"/>
        <end position="435"/>
    </location>
</feature>
<feature type="binding site" evidence="1">
    <location>
        <position position="131"/>
    </location>
    <ligand>
        <name>(6S)-5,6,7,8-tetrahydrofolate</name>
        <dbReference type="ChEBI" id="CHEBI:57453"/>
    </ligand>
</feature>
<feature type="binding site" evidence="1">
    <location>
        <begin position="135"/>
        <end position="137"/>
    </location>
    <ligand>
        <name>(6S)-5,6,7,8-tetrahydrofolate</name>
        <dbReference type="ChEBI" id="CHEBI:57453"/>
    </ligand>
</feature>
<feature type="site" description="Plays an important role in substrate specificity" evidence="1">
    <location>
        <position position="239"/>
    </location>
</feature>
<feature type="modified residue" description="N6-(pyridoxal phosphate)lysine" evidence="1">
    <location>
        <position position="240"/>
    </location>
</feature>
<accession>B7GTL3</accession>
<accession>E8MLR4</accession>
<proteinExistence type="inferred from homology"/>
<evidence type="ECO:0000255" key="1">
    <source>
        <dbReference type="HAMAP-Rule" id="MF_00051"/>
    </source>
</evidence>
<gene>
    <name evidence="1" type="primary">glyA</name>
    <name type="ordered locus">BLIJ_1912</name>
    <name type="ordered locus">Blon_1847</name>
</gene>
<dbReference type="EC" id="2.1.2.1" evidence="1"/>
<dbReference type="EMBL" id="CP001095">
    <property type="protein sequence ID" value="ACJ52922.1"/>
    <property type="molecule type" value="Genomic_DNA"/>
</dbReference>
<dbReference type="EMBL" id="AP010889">
    <property type="protein sequence ID" value="BAJ69491.1"/>
    <property type="molecule type" value="Genomic_DNA"/>
</dbReference>
<dbReference type="RefSeq" id="WP_012578137.1">
    <property type="nucleotide sequence ID" value="NC_011593.1"/>
</dbReference>
<dbReference type="SMR" id="B7GTL3"/>
<dbReference type="KEGG" id="bln:Blon_1847"/>
<dbReference type="KEGG" id="blon:BLIJ_1912"/>
<dbReference type="PATRIC" id="fig|391904.8.peg.1919"/>
<dbReference type="HOGENOM" id="CLU_022477_2_1_11"/>
<dbReference type="UniPathway" id="UPA00193"/>
<dbReference type="UniPathway" id="UPA00288">
    <property type="reaction ID" value="UER01023"/>
</dbReference>
<dbReference type="Proteomes" id="UP000001360">
    <property type="component" value="Chromosome"/>
</dbReference>
<dbReference type="GO" id="GO:0005829">
    <property type="term" value="C:cytosol"/>
    <property type="evidence" value="ECO:0007669"/>
    <property type="project" value="TreeGrafter"/>
</dbReference>
<dbReference type="GO" id="GO:0004372">
    <property type="term" value="F:glycine hydroxymethyltransferase activity"/>
    <property type="evidence" value="ECO:0007669"/>
    <property type="project" value="UniProtKB-UniRule"/>
</dbReference>
<dbReference type="GO" id="GO:0030170">
    <property type="term" value="F:pyridoxal phosphate binding"/>
    <property type="evidence" value="ECO:0007669"/>
    <property type="project" value="UniProtKB-UniRule"/>
</dbReference>
<dbReference type="GO" id="GO:0019264">
    <property type="term" value="P:glycine biosynthetic process from serine"/>
    <property type="evidence" value="ECO:0007669"/>
    <property type="project" value="UniProtKB-UniRule"/>
</dbReference>
<dbReference type="GO" id="GO:0035999">
    <property type="term" value="P:tetrahydrofolate interconversion"/>
    <property type="evidence" value="ECO:0007669"/>
    <property type="project" value="UniProtKB-UniRule"/>
</dbReference>
<dbReference type="CDD" id="cd00378">
    <property type="entry name" value="SHMT"/>
    <property type="match status" value="1"/>
</dbReference>
<dbReference type="FunFam" id="3.40.640.10:FF:000001">
    <property type="entry name" value="Serine hydroxymethyltransferase"/>
    <property type="match status" value="1"/>
</dbReference>
<dbReference type="Gene3D" id="3.90.1150.10">
    <property type="entry name" value="Aspartate Aminotransferase, domain 1"/>
    <property type="match status" value="1"/>
</dbReference>
<dbReference type="Gene3D" id="3.40.640.10">
    <property type="entry name" value="Type I PLP-dependent aspartate aminotransferase-like (Major domain)"/>
    <property type="match status" value="1"/>
</dbReference>
<dbReference type="HAMAP" id="MF_00051">
    <property type="entry name" value="SHMT"/>
    <property type="match status" value="1"/>
</dbReference>
<dbReference type="InterPro" id="IPR015424">
    <property type="entry name" value="PyrdxlP-dep_Trfase"/>
</dbReference>
<dbReference type="InterPro" id="IPR015421">
    <property type="entry name" value="PyrdxlP-dep_Trfase_major"/>
</dbReference>
<dbReference type="InterPro" id="IPR015422">
    <property type="entry name" value="PyrdxlP-dep_Trfase_small"/>
</dbReference>
<dbReference type="InterPro" id="IPR001085">
    <property type="entry name" value="Ser_HO-MeTrfase"/>
</dbReference>
<dbReference type="InterPro" id="IPR049943">
    <property type="entry name" value="Ser_HO-MeTrfase-like"/>
</dbReference>
<dbReference type="InterPro" id="IPR019798">
    <property type="entry name" value="Ser_HO-MeTrfase_PLP_BS"/>
</dbReference>
<dbReference type="InterPro" id="IPR039429">
    <property type="entry name" value="SHMT-like_dom"/>
</dbReference>
<dbReference type="NCBIfam" id="NF000586">
    <property type="entry name" value="PRK00011.1"/>
    <property type="match status" value="1"/>
</dbReference>
<dbReference type="PANTHER" id="PTHR11680">
    <property type="entry name" value="SERINE HYDROXYMETHYLTRANSFERASE"/>
    <property type="match status" value="1"/>
</dbReference>
<dbReference type="PANTHER" id="PTHR11680:SF35">
    <property type="entry name" value="SERINE HYDROXYMETHYLTRANSFERASE 1"/>
    <property type="match status" value="1"/>
</dbReference>
<dbReference type="Pfam" id="PF00464">
    <property type="entry name" value="SHMT"/>
    <property type="match status" value="1"/>
</dbReference>
<dbReference type="PIRSF" id="PIRSF000412">
    <property type="entry name" value="SHMT"/>
    <property type="match status" value="1"/>
</dbReference>
<dbReference type="SUPFAM" id="SSF53383">
    <property type="entry name" value="PLP-dependent transferases"/>
    <property type="match status" value="1"/>
</dbReference>
<dbReference type="PROSITE" id="PS00096">
    <property type="entry name" value="SHMT"/>
    <property type="match status" value="1"/>
</dbReference>
<sequence length="435" mass="46732">MTASPLAQKATDAFNAPICETDPEIAELLDSELGRQRNGLEMIASENFVPRAVLQCQGSVLTNKYAEGYPGHRYYGGCEYVDQIETIARERAKALFGAEYVNVQPHSGAQANAAVYQALVKPGDTVLGLALDHGGHLTHGMKINFSGRFYHAEAYGVNPVTFRIDPEIIRQRALETHPAMIIGGWSAYPRIEDFKAMKEIADEVGAKFWVDMAHFAGLVAAGLHPSPVPYADVVSSTSHKTFGGPRSGFILAKQEYAKKLNSSVFPGQQGGPLMHVIAGKAVSFKVAGTPEFKDRMQRTLDGAKILAERLLADDVKANGISVLTGGTDVHLVMVDLRNSEMDGQQGEDLLAACGITINRNTVPFDPRPASVASGLRIGTSALATRGFGPKEYEEVADIIGTALAAGPSADVTALKARVDKLAEDFPLYPDLDQIH</sequence>
<comment type="function">
    <text evidence="1">Catalyzes the reversible interconversion of serine and glycine with tetrahydrofolate (THF) serving as the one-carbon carrier. This reaction serves as the major source of one-carbon groups required for the biosynthesis of purines, thymidylate, methionine, and other important biomolecules. Also exhibits THF-independent aldolase activity toward beta-hydroxyamino acids, producing glycine and aldehydes, via a retro-aldol mechanism.</text>
</comment>
<comment type="catalytic activity">
    <reaction evidence="1">
        <text>(6R)-5,10-methylene-5,6,7,8-tetrahydrofolate + glycine + H2O = (6S)-5,6,7,8-tetrahydrofolate + L-serine</text>
        <dbReference type="Rhea" id="RHEA:15481"/>
        <dbReference type="ChEBI" id="CHEBI:15377"/>
        <dbReference type="ChEBI" id="CHEBI:15636"/>
        <dbReference type="ChEBI" id="CHEBI:33384"/>
        <dbReference type="ChEBI" id="CHEBI:57305"/>
        <dbReference type="ChEBI" id="CHEBI:57453"/>
        <dbReference type="EC" id="2.1.2.1"/>
    </reaction>
</comment>
<comment type="cofactor">
    <cofactor evidence="1">
        <name>pyridoxal 5'-phosphate</name>
        <dbReference type="ChEBI" id="CHEBI:597326"/>
    </cofactor>
</comment>
<comment type="pathway">
    <text evidence="1">One-carbon metabolism; tetrahydrofolate interconversion.</text>
</comment>
<comment type="pathway">
    <text evidence="1">Amino-acid biosynthesis; glycine biosynthesis; glycine from L-serine: step 1/1.</text>
</comment>
<comment type="subunit">
    <text evidence="1">Homodimer.</text>
</comment>
<comment type="subcellular location">
    <subcellularLocation>
        <location evidence="1">Cytoplasm</location>
    </subcellularLocation>
</comment>
<comment type="similarity">
    <text evidence="1">Belongs to the SHMT family.</text>
</comment>
<protein>
    <recommendedName>
        <fullName evidence="1">Serine hydroxymethyltransferase</fullName>
        <shortName evidence="1">SHMT</shortName>
        <shortName evidence="1">Serine methylase</shortName>
        <ecNumber evidence="1">2.1.2.1</ecNumber>
    </recommendedName>
</protein>
<name>GLYA_BIFLS</name>
<keyword id="KW-0028">Amino-acid biosynthesis</keyword>
<keyword id="KW-0963">Cytoplasm</keyword>
<keyword id="KW-0554">One-carbon metabolism</keyword>
<keyword id="KW-0663">Pyridoxal phosphate</keyword>
<keyword id="KW-0808">Transferase</keyword>
<reference key="1">
    <citation type="journal article" date="2008" name="Proc. Natl. Acad. Sci. U.S.A.">
        <title>The genome sequence of Bifidobacterium longum subsp. infantis reveals adaptations for milk utilization within the infant microbiome.</title>
        <authorList>
            <person name="Sela D.A."/>
            <person name="Chapman J."/>
            <person name="Adeuya A."/>
            <person name="Kim J.H."/>
            <person name="Chen F."/>
            <person name="Whitehead T.R."/>
            <person name="Lapidus A."/>
            <person name="Rokhsar D.S."/>
            <person name="Lebrilla C.B."/>
            <person name="German J.B."/>
            <person name="Price N.P."/>
            <person name="Richardson P.M."/>
            <person name="Mills D.A."/>
        </authorList>
    </citation>
    <scope>NUCLEOTIDE SEQUENCE [LARGE SCALE GENOMIC DNA]</scope>
    <source>
        <strain>ATCC 15697 / DSM 20088 / JCM 1222 / NCTC 11817 / S12</strain>
    </source>
</reference>
<reference key="2">
    <citation type="journal article" date="2011" name="Nature">
        <title>Bifidobacteria can protect from enteropathogenic infection through production of acetate.</title>
        <authorList>
            <person name="Fukuda S."/>
            <person name="Toh H."/>
            <person name="Hase K."/>
            <person name="Oshima K."/>
            <person name="Nakanishi Y."/>
            <person name="Yoshimura K."/>
            <person name="Tobe T."/>
            <person name="Clarke J.M."/>
            <person name="Topping D.L."/>
            <person name="Suzuki T."/>
            <person name="Taylor T.D."/>
            <person name="Itoh K."/>
            <person name="Kikuchi J."/>
            <person name="Morita H."/>
            <person name="Hattori M."/>
            <person name="Ohno H."/>
        </authorList>
    </citation>
    <scope>NUCLEOTIDE SEQUENCE [LARGE SCALE GENOMIC DNA]</scope>
    <source>
        <strain>ATCC 15697 / DSM 20088 / JCM 1222 / NCTC 11817 / S12</strain>
    </source>
</reference>
<organism>
    <name type="scientific">Bifidobacterium longum subsp. infantis (strain ATCC 15697 / DSM 20088 / JCM 1222 / NCTC 11817 / S12)</name>
    <dbReference type="NCBI Taxonomy" id="391904"/>
    <lineage>
        <taxon>Bacteria</taxon>
        <taxon>Bacillati</taxon>
        <taxon>Actinomycetota</taxon>
        <taxon>Actinomycetes</taxon>
        <taxon>Bifidobacteriales</taxon>
        <taxon>Bifidobacteriaceae</taxon>
        <taxon>Bifidobacterium</taxon>
    </lineage>
</organism>